<organism>
    <name type="scientific">Ralstonia pickettii (strain 12J)</name>
    <dbReference type="NCBI Taxonomy" id="402626"/>
    <lineage>
        <taxon>Bacteria</taxon>
        <taxon>Pseudomonadati</taxon>
        <taxon>Pseudomonadota</taxon>
        <taxon>Betaproteobacteria</taxon>
        <taxon>Burkholderiales</taxon>
        <taxon>Burkholderiaceae</taxon>
        <taxon>Ralstonia</taxon>
    </lineage>
</organism>
<name>FMT_RALPJ</name>
<gene>
    <name evidence="1" type="primary">fmt</name>
    <name type="ordered locus">Rpic_3677</name>
</gene>
<keyword id="KW-0648">Protein biosynthesis</keyword>
<keyword id="KW-0808">Transferase</keyword>
<accession>B2U795</accession>
<feature type="chain" id="PRO_1000098431" description="Methionyl-tRNA formyltransferase">
    <location>
        <begin position="1"/>
        <end position="327"/>
    </location>
</feature>
<feature type="binding site" evidence="1">
    <location>
        <begin position="122"/>
        <end position="125"/>
    </location>
    <ligand>
        <name>(6S)-5,6,7,8-tetrahydrofolate</name>
        <dbReference type="ChEBI" id="CHEBI:57453"/>
    </ligand>
</feature>
<proteinExistence type="inferred from homology"/>
<comment type="function">
    <text evidence="1">Attaches a formyl group to the free amino group of methionyl-tRNA(fMet). The formyl group appears to play a dual role in the initiator identity of N-formylmethionyl-tRNA by promoting its recognition by IF2 and preventing the misappropriation of this tRNA by the elongation apparatus.</text>
</comment>
<comment type="catalytic activity">
    <reaction evidence="1">
        <text>L-methionyl-tRNA(fMet) + (6R)-10-formyltetrahydrofolate = N-formyl-L-methionyl-tRNA(fMet) + (6S)-5,6,7,8-tetrahydrofolate + H(+)</text>
        <dbReference type="Rhea" id="RHEA:24380"/>
        <dbReference type="Rhea" id="RHEA-COMP:9952"/>
        <dbReference type="Rhea" id="RHEA-COMP:9953"/>
        <dbReference type="ChEBI" id="CHEBI:15378"/>
        <dbReference type="ChEBI" id="CHEBI:57453"/>
        <dbReference type="ChEBI" id="CHEBI:78530"/>
        <dbReference type="ChEBI" id="CHEBI:78844"/>
        <dbReference type="ChEBI" id="CHEBI:195366"/>
        <dbReference type="EC" id="2.1.2.9"/>
    </reaction>
</comment>
<comment type="similarity">
    <text evidence="1">Belongs to the Fmt family.</text>
</comment>
<dbReference type="EC" id="2.1.2.9" evidence="1"/>
<dbReference type="EMBL" id="CP001068">
    <property type="protein sequence ID" value="ACD28795.1"/>
    <property type="molecule type" value="Genomic_DNA"/>
</dbReference>
<dbReference type="SMR" id="B2U795"/>
<dbReference type="STRING" id="402626.Rpic_3677"/>
<dbReference type="KEGG" id="rpi:Rpic_3677"/>
<dbReference type="PATRIC" id="fig|402626.5.peg.4814"/>
<dbReference type="eggNOG" id="COG0223">
    <property type="taxonomic scope" value="Bacteria"/>
</dbReference>
<dbReference type="HOGENOM" id="CLU_033347_1_2_4"/>
<dbReference type="GO" id="GO:0005829">
    <property type="term" value="C:cytosol"/>
    <property type="evidence" value="ECO:0007669"/>
    <property type="project" value="TreeGrafter"/>
</dbReference>
<dbReference type="GO" id="GO:0004479">
    <property type="term" value="F:methionyl-tRNA formyltransferase activity"/>
    <property type="evidence" value="ECO:0007669"/>
    <property type="project" value="UniProtKB-UniRule"/>
</dbReference>
<dbReference type="CDD" id="cd08646">
    <property type="entry name" value="FMT_core_Met-tRNA-FMT_N"/>
    <property type="match status" value="1"/>
</dbReference>
<dbReference type="CDD" id="cd08704">
    <property type="entry name" value="Met_tRNA_FMT_C"/>
    <property type="match status" value="1"/>
</dbReference>
<dbReference type="Gene3D" id="3.10.25.10">
    <property type="entry name" value="Formyl transferase, C-terminal domain"/>
    <property type="match status" value="1"/>
</dbReference>
<dbReference type="Gene3D" id="3.40.50.170">
    <property type="entry name" value="Formyl transferase, N-terminal domain"/>
    <property type="match status" value="1"/>
</dbReference>
<dbReference type="HAMAP" id="MF_00182">
    <property type="entry name" value="Formyl_trans"/>
    <property type="match status" value="1"/>
</dbReference>
<dbReference type="InterPro" id="IPR005794">
    <property type="entry name" value="Fmt"/>
</dbReference>
<dbReference type="InterPro" id="IPR005793">
    <property type="entry name" value="Formyl_trans_C"/>
</dbReference>
<dbReference type="InterPro" id="IPR037022">
    <property type="entry name" value="Formyl_trans_C_sf"/>
</dbReference>
<dbReference type="InterPro" id="IPR002376">
    <property type="entry name" value="Formyl_transf_N"/>
</dbReference>
<dbReference type="InterPro" id="IPR036477">
    <property type="entry name" value="Formyl_transf_N_sf"/>
</dbReference>
<dbReference type="InterPro" id="IPR011034">
    <property type="entry name" value="Formyl_transferase-like_C_sf"/>
</dbReference>
<dbReference type="InterPro" id="IPR001555">
    <property type="entry name" value="GART_AS"/>
</dbReference>
<dbReference type="InterPro" id="IPR044135">
    <property type="entry name" value="Met-tRNA-FMT_C"/>
</dbReference>
<dbReference type="InterPro" id="IPR041711">
    <property type="entry name" value="Met-tRNA-FMT_N"/>
</dbReference>
<dbReference type="NCBIfam" id="TIGR00460">
    <property type="entry name" value="fmt"/>
    <property type="match status" value="1"/>
</dbReference>
<dbReference type="PANTHER" id="PTHR11138">
    <property type="entry name" value="METHIONYL-TRNA FORMYLTRANSFERASE"/>
    <property type="match status" value="1"/>
</dbReference>
<dbReference type="PANTHER" id="PTHR11138:SF5">
    <property type="entry name" value="METHIONYL-TRNA FORMYLTRANSFERASE, MITOCHONDRIAL"/>
    <property type="match status" value="1"/>
</dbReference>
<dbReference type="Pfam" id="PF02911">
    <property type="entry name" value="Formyl_trans_C"/>
    <property type="match status" value="1"/>
</dbReference>
<dbReference type="Pfam" id="PF00551">
    <property type="entry name" value="Formyl_trans_N"/>
    <property type="match status" value="1"/>
</dbReference>
<dbReference type="SUPFAM" id="SSF50486">
    <property type="entry name" value="FMT C-terminal domain-like"/>
    <property type="match status" value="1"/>
</dbReference>
<dbReference type="SUPFAM" id="SSF53328">
    <property type="entry name" value="Formyltransferase"/>
    <property type="match status" value="1"/>
</dbReference>
<dbReference type="PROSITE" id="PS00373">
    <property type="entry name" value="GART"/>
    <property type="match status" value="1"/>
</dbReference>
<evidence type="ECO:0000255" key="1">
    <source>
        <dbReference type="HAMAP-Rule" id="MF_00182"/>
    </source>
</evidence>
<protein>
    <recommendedName>
        <fullName evidence="1">Methionyl-tRNA formyltransferase</fullName>
        <ecNumber evidence="1">2.1.2.9</ecNumber>
    </recommendedName>
</protein>
<reference key="1">
    <citation type="submission" date="2008-05" db="EMBL/GenBank/DDBJ databases">
        <title>Complete sequence of chromosome 1 of Ralstonia pickettii 12J.</title>
        <authorList>
            <person name="Lucas S."/>
            <person name="Copeland A."/>
            <person name="Lapidus A."/>
            <person name="Glavina del Rio T."/>
            <person name="Dalin E."/>
            <person name="Tice H."/>
            <person name="Bruce D."/>
            <person name="Goodwin L."/>
            <person name="Pitluck S."/>
            <person name="Meincke L."/>
            <person name="Brettin T."/>
            <person name="Detter J.C."/>
            <person name="Han C."/>
            <person name="Kuske C.R."/>
            <person name="Schmutz J."/>
            <person name="Larimer F."/>
            <person name="Land M."/>
            <person name="Hauser L."/>
            <person name="Kyrpides N."/>
            <person name="Mikhailova N."/>
            <person name="Marsh T."/>
            <person name="Richardson P."/>
        </authorList>
    </citation>
    <scope>NUCLEOTIDE SEQUENCE [LARGE SCALE GENOMIC DNA]</scope>
    <source>
        <strain>12J</strain>
    </source>
</reference>
<sequence>MTSTLRVAFAGTPEFAQIALAAIHQAGFPVVAVLSQPDRPAGRGMQLQASPVTQYAVTHGFAPILQPPSLRRTGKYPQEAAEAIDALTAQRPDVMVVAAYGLILPQEVLDLPRFGCINIHASLLPRWRGAAPIHRAIEAGDAESGITLMQMDAGLDTGDMIAMERVPIGLTDTTGTLHDTLAALGGRMVVEALAKLAQDGKLHATPQPAEGITYAEKIAKDEAALDWSRHAAALLRQVHAFNPFPGASAALDGVAIKFWQAEVLADRPAEAEPGVVLAANAEGVTIACGAGALRVTQLQKPGGKRLPAREFLQGLAIQPGQRFASRG</sequence>